<evidence type="ECO:0000255" key="1">
    <source>
        <dbReference type="HAMAP-Rule" id="MF_00402"/>
    </source>
</evidence>
<evidence type="ECO:0000305" key="2"/>
<feature type="chain" id="PRO_1000193831" description="Large ribosomal subunit protein bL19">
    <location>
        <begin position="1"/>
        <end position="115"/>
    </location>
</feature>
<comment type="function">
    <text evidence="1">This protein is located at the 30S-50S ribosomal subunit interface and may play a role in the structure and function of the aminoacyl-tRNA binding site.</text>
</comment>
<comment type="similarity">
    <text evidence="1">Belongs to the bacterial ribosomal protein bL19 family.</text>
</comment>
<protein>
    <recommendedName>
        <fullName evidence="1">Large ribosomal subunit protein bL19</fullName>
    </recommendedName>
    <alternativeName>
        <fullName evidence="2">50S ribosomal protein L19</fullName>
    </alternativeName>
</protein>
<reference key="1">
    <citation type="journal article" date="2008" name="DNA Res.">
        <title>Complete genome sequence and comparative analysis of the wild-type commensal Escherichia coli strain SE11 isolated from a healthy adult.</title>
        <authorList>
            <person name="Oshima K."/>
            <person name="Toh H."/>
            <person name="Ogura Y."/>
            <person name="Sasamoto H."/>
            <person name="Morita H."/>
            <person name="Park S.-H."/>
            <person name="Ooka T."/>
            <person name="Iyoda S."/>
            <person name="Taylor T.D."/>
            <person name="Hayashi T."/>
            <person name="Itoh K."/>
            <person name="Hattori M."/>
        </authorList>
    </citation>
    <scope>NUCLEOTIDE SEQUENCE [LARGE SCALE GENOMIC DNA]</scope>
    <source>
        <strain>SE11</strain>
    </source>
</reference>
<gene>
    <name evidence="1" type="primary">rplS</name>
    <name type="ordered locus">ECSE_2890</name>
</gene>
<accession>B6I628</accession>
<organism>
    <name type="scientific">Escherichia coli (strain SE11)</name>
    <dbReference type="NCBI Taxonomy" id="409438"/>
    <lineage>
        <taxon>Bacteria</taxon>
        <taxon>Pseudomonadati</taxon>
        <taxon>Pseudomonadota</taxon>
        <taxon>Gammaproteobacteria</taxon>
        <taxon>Enterobacterales</taxon>
        <taxon>Enterobacteriaceae</taxon>
        <taxon>Escherichia</taxon>
    </lineage>
</organism>
<sequence>MSNIIKQLEQEQMKQDVPSFRPGDTVEVKVWVVEGSKKRLQAFEGVVIAIRNRGLHSAFTVRKISNGEGVERVFQTHSPVVDSISVKRRGAVRKAKLYYLRERTGKAARIKERLN</sequence>
<name>RL19_ECOSE</name>
<dbReference type="EMBL" id="AP009240">
    <property type="protein sequence ID" value="BAG78414.1"/>
    <property type="molecule type" value="Genomic_DNA"/>
</dbReference>
<dbReference type="RefSeq" id="WP_000065253.1">
    <property type="nucleotide sequence ID" value="NC_011415.1"/>
</dbReference>
<dbReference type="SMR" id="B6I628"/>
<dbReference type="GeneID" id="93774456"/>
<dbReference type="KEGG" id="ecy:ECSE_2890"/>
<dbReference type="HOGENOM" id="CLU_103507_2_1_6"/>
<dbReference type="Proteomes" id="UP000008199">
    <property type="component" value="Chromosome"/>
</dbReference>
<dbReference type="GO" id="GO:0022625">
    <property type="term" value="C:cytosolic large ribosomal subunit"/>
    <property type="evidence" value="ECO:0007669"/>
    <property type="project" value="TreeGrafter"/>
</dbReference>
<dbReference type="GO" id="GO:0003735">
    <property type="term" value="F:structural constituent of ribosome"/>
    <property type="evidence" value="ECO:0007669"/>
    <property type="project" value="InterPro"/>
</dbReference>
<dbReference type="GO" id="GO:0006412">
    <property type="term" value="P:translation"/>
    <property type="evidence" value="ECO:0007669"/>
    <property type="project" value="UniProtKB-UniRule"/>
</dbReference>
<dbReference type="FunFam" id="2.30.30.790:FF:000001">
    <property type="entry name" value="50S ribosomal protein L19"/>
    <property type="match status" value="1"/>
</dbReference>
<dbReference type="Gene3D" id="2.30.30.790">
    <property type="match status" value="1"/>
</dbReference>
<dbReference type="HAMAP" id="MF_00402">
    <property type="entry name" value="Ribosomal_bL19"/>
    <property type="match status" value="1"/>
</dbReference>
<dbReference type="InterPro" id="IPR001857">
    <property type="entry name" value="Ribosomal_bL19"/>
</dbReference>
<dbReference type="InterPro" id="IPR018257">
    <property type="entry name" value="Ribosomal_bL19_CS"/>
</dbReference>
<dbReference type="InterPro" id="IPR038657">
    <property type="entry name" value="Ribosomal_bL19_sf"/>
</dbReference>
<dbReference type="InterPro" id="IPR008991">
    <property type="entry name" value="Translation_prot_SH3-like_sf"/>
</dbReference>
<dbReference type="NCBIfam" id="TIGR01024">
    <property type="entry name" value="rplS_bact"/>
    <property type="match status" value="1"/>
</dbReference>
<dbReference type="PANTHER" id="PTHR15680:SF9">
    <property type="entry name" value="LARGE RIBOSOMAL SUBUNIT PROTEIN BL19M"/>
    <property type="match status" value="1"/>
</dbReference>
<dbReference type="PANTHER" id="PTHR15680">
    <property type="entry name" value="RIBOSOMAL PROTEIN L19"/>
    <property type="match status" value="1"/>
</dbReference>
<dbReference type="Pfam" id="PF01245">
    <property type="entry name" value="Ribosomal_L19"/>
    <property type="match status" value="1"/>
</dbReference>
<dbReference type="PIRSF" id="PIRSF002191">
    <property type="entry name" value="Ribosomal_L19"/>
    <property type="match status" value="1"/>
</dbReference>
<dbReference type="PRINTS" id="PR00061">
    <property type="entry name" value="RIBOSOMALL19"/>
</dbReference>
<dbReference type="SUPFAM" id="SSF50104">
    <property type="entry name" value="Translation proteins SH3-like domain"/>
    <property type="match status" value="1"/>
</dbReference>
<dbReference type="PROSITE" id="PS01015">
    <property type="entry name" value="RIBOSOMAL_L19"/>
    <property type="match status" value="1"/>
</dbReference>
<keyword id="KW-0687">Ribonucleoprotein</keyword>
<keyword id="KW-0689">Ribosomal protein</keyword>
<proteinExistence type="inferred from homology"/>